<evidence type="ECO:0000250" key="1"/>
<evidence type="ECO:0000250" key="2">
    <source>
        <dbReference type="UniProtKB" id="P0AAA9"/>
    </source>
</evidence>
<evidence type="ECO:0000305" key="3"/>
<dbReference type="EMBL" id="CP000026">
    <property type="protein sequence ID" value="AAV79761.1"/>
    <property type="molecule type" value="Genomic_DNA"/>
</dbReference>
<dbReference type="RefSeq" id="WP_000828129.1">
    <property type="nucleotide sequence ID" value="NC_006511.1"/>
</dbReference>
<dbReference type="SMR" id="Q5PK98"/>
<dbReference type="KEGG" id="spt:SPA4009"/>
<dbReference type="HOGENOM" id="CLU_124884_0_0_6"/>
<dbReference type="Proteomes" id="UP000008185">
    <property type="component" value="Chromosome"/>
</dbReference>
<dbReference type="GO" id="GO:0042597">
    <property type="term" value="C:periplasmic space"/>
    <property type="evidence" value="ECO:0007669"/>
    <property type="project" value="UniProtKB-SubCell"/>
</dbReference>
<dbReference type="Gene3D" id="1.20.120.1490">
    <property type="match status" value="1"/>
</dbReference>
<dbReference type="InterPro" id="IPR025961">
    <property type="entry name" value="Metal_resist"/>
</dbReference>
<dbReference type="NCBIfam" id="NF008584">
    <property type="entry name" value="PRK11546.1"/>
    <property type="match status" value="1"/>
</dbReference>
<dbReference type="Pfam" id="PF13801">
    <property type="entry name" value="Metal_resist"/>
    <property type="match status" value="1"/>
</dbReference>
<keyword id="KW-0574">Periplasm</keyword>
<keyword id="KW-0732">Signal</keyword>
<keyword id="KW-0346">Stress response</keyword>
<keyword id="KW-0862">Zinc</keyword>
<proteinExistence type="inferred from homology"/>
<gene>
    <name type="primary">zraP</name>
    <name type="ordered locus">SPA4009</name>
</gene>
<reference key="1">
    <citation type="journal article" date="2004" name="Nat. Genet.">
        <title>Comparison of genome degradation in Paratyphi A and Typhi, human-restricted serovars of Salmonella enterica that cause typhoid.</title>
        <authorList>
            <person name="McClelland M."/>
            <person name="Sanderson K.E."/>
            <person name="Clifton S.W."/>
            <person name="Latreille P."/>
            <person name="Porwollik S."/>
            <person name="Sabo A."/>
            <person name="Meyer R."/>
            <person name="Bieri T."/>
            <person name="Ozersky P."/>
            <person name="McLellan M."/>
            <person name="Harkins C.R."/>
            <person name="Wang C."/>
            <person name="Nguyen C."/>
            <person name="Berghoff A."/>
            <person name="Elliott G."/>
            <person name="Kohlberg S."/>
            <person name="Strong C."/>
            <person name="Du F."/>
            <person name="Carter J."/>
            <person name="Kremizki C."/>
            <person name="Layman D."/>
            <person name="Leonard S."/>
            <person name="Sun H."/>
            <person name="Fulton L."/>
            <person name="Nash W."/>
            <person name="Miner T."/>
            <person name="Minx P."/>
            <person name="Delehaunty K."/>
            <person name="Fronick C."/>
            <person name="Magrini V."/>
            <person name="Nhan M."/>
            <person name="Warren W."/>
            <person name="Florea L."/>
            <person name="Spieth J."/>
            <person name="Wilson R.K."/>
        </authorList>
    </citation>
    <scope>NUCLEOTIDE SEQUENCE [LARGE SCALE GENOMIC DNA]</scope>
    <source>
        <strain>ATCC 9150 / SARB42</strain>
    </source>
</reference>
<sequence length="151" mass="16129">MKRNNKSAIALIALSLLALSSGAAFAGHHWGNNDGMWQQGGSPLTTEQQATAQKIYDDYYTQTSALRQQLISKRYEYNALLTASSPDTAKINAVAKEMESLGQKLDEQRVKRDVAMAQAGIPRGAGMGYGGCGGYGGGYHRGGGHMGMGNW</sequence>
<comment type="function">
    <text evidence="2">Part of the Zra signaling pathway, an envelope stress response (ESR) system composed of the periplasmic accessory protein ZraP, the histidine kinase ZraS and the transcriptional regulator ZraR. The ZraPSR system contributes to antibiotic resistance and is important for membrane integrity in the presence of membrane-targeting biocides. ZraP acts as a modulator which has both a regulatory and a chaperone function. The zinc-bound form of ZraP modulates the response of the ZraPSR system by inhibiting the expression of the zra genes, probably by interacting with ZraS.</text>
</comment>
<comment type="subcellular location">
    <subcellularLocation>
        <location evidence="2">Periplasm</location>
    </subcellularLocation>
</comment>
<comment type="similarity">
    <text evidence="3">Belongs to the ZraP family.</text>
</comment>
<accession>Q5PK98</accession>
<feature type="signal peptide" evidence="1">
    <location>
        <begin position="1"/>
        <end position="26"/>
    </location>
</feature>
<feature type="chain" id="PRO_0000041884" description="Signaling pathway modulator ZraP">
    <location>
        <begin position="27"/>
        <end position="151"/>
    </location>
</feature>
<protein>
    <recommendedName>
        <fullName evidence="2">Signaling pathway modulator ZraP</fullName>
    </recommendedName>
    <alternativeName>
        <fullName>Zinc resistance-associated protein</fullName>
    </alternativeName>
</protein>
<organism>
    <name type="scientific">Salmonella paratyphi A (strain ATCC 9150 / SARB42)</name>
    <dbReference type="NCBI Taxonomy" id="295319"/>
    <lineage>
        <taxon>Bacteria</taxon>
        <taxon>Pseudomonadati</taxon>
        <taxon>Pseudomonadota</taxon>
        <taxon>Gammaproteobacteria</taxon>
        <taxon>Enterobacterales</taxon>
        <taxon>Enterobacteriaceae</taxon>
        <taxon>Salmonella</taxon>
    </lineage>
</organism>
<name>ZRAP_SALPA</name>